<gene>
    <name evidence="1" type="primary">queF</name>
    <name type="ordered locus">BOV_1144</name>
</gene>
<accession>A5VQV8</accession>
<dbReference type="EC" id="1.7.1.13" evidence="1"/>
<dbReference type="EMBL" id="CP000708">
    <property type="protein sequence ID" value="ABQ61236.1"/>
    <property type="molecule type" value="Genomic_DNA"/>
</dbReference>
<dbReference type="RefSeq" id="WP_004688441.1">
    <property type="nucleotide sequence ID" value="NC_009505.1"/>
</dbReference>
<dbReference type="SMR" id="A5VQV8"/>
<dbReference type="GeneID" id="55590862"/>
<dbReference type="KEGG" id="bov:BOV_1144"/>
<dbReference type="HOGENOM" id="CLU_102489_0_1_5"/>
<dbReference type="PhylomeDB" id="A5VQV8"/>
<dbReference type="UniPathway" id="UPA00392"/>
<dbReference type="Proteomes" id="UP000006383">
    <property type="component" value="Chromosome I"/>
</dbReference>
<dbReference type="GO" id="GO:0005737">
    <property type="term" value="C:cytoplasm"/>
    <property type="evidence" value="ECO:0007669"/>
    <property type="project" value="UniProtKB-SubCell"/>
</dbReference>
<dbReference type="GO" id="GO:0033739">
    <property type="term" value="F:preQ1 synthase activity"/>
    <property type="evidence" value="ECO:0007669"/>
    <property type="project" value="UniProtKB-UniRule"/>
</dbReference>
<dbReference type="GO" id="GO:0008616">
    <property type="term" value="P:queuosine biosynthetic process"/>
    <property type="evidence" value="ECO:0007669"/>
    <property type="project" value="UniProtKB-UniRule"/>
</dbReference>
<dbReference type="GO" id="GO:0006400">
    <property type="term" value="P:tRNA modification"/>
    <property type="evidence" value="ECO:0007669"/>
    <property type="project" value="UniProtKB-UniRule"/>
</dbReference>
<dbReference type="Gene3D" id="3.30.1130.10">
    <property type="match status" value="1"/>
</dbReference>
<dbReference type="HAMAP" id="MF_00818">
    <property type="entry name" value="QueF_type1"/>
    <property type="match status" value="1"/>
</dbReference>
<dbReference type="InterPro" id="IPR043133">
    <property type="entry name" value="GTP-CH-I_C/QueF"/>
</dbReference>
<dbReference type="InterPro" id="IPR050084">
    <property type="entry name" value="NADPH_dep_7-cyano-7-deazaG_red"/>
</dbReference>
<dbReference type="InterPro" id="IPR029500">
    <property type="entry name" value="QueF"/>
</dbReference>
<dbReference type="InterPro" id="IPR016856">
    <property type="entry name" value="QueF_type1"/>
</dbReference>
<dbReference type="NCBIfam" id="TIGR03139">
    <property type="entry name" value="QueF-II"/>
    <property type="match status" value="1"/>
</dbReference>
<dbReference type="PANTHER" id="PTHR34354">
    <property type="entry name" value="NADPH-DEPENDENT 7-CYANO-7-DEAZAGUANINE REDUCTASE"/>
    <property type="match status" value="1"/>
</dbReference>
<dbReference type="PANTHER" id="PTHR34354:SF1">
    <property type="entry name" value="NADPH-DEPENDENT 7-CYANO-7-DEAZAGUANINE REDUCTASE"/>
    <property type="match status" value="1"/>
</dbReference>
<dbReference type="Pfam" id="PF14489">
    <property type="entry name" value="QueF"/>
    <property type="match status" value="1"/>
</dbReference>
<dbReference type="SUPFAM" id="SSF55620">
    <property type="entry name" value="Tetrahydrobiopterin biosynthesis enzymes-like"/>
    <property type="match status" value="1"/>
</dbReference>
<evidence type="ECO:0000255" key="1">
    <source>
        <dbReference type="HAMAP-Rule" id="MF_00818"/>
    </source>
</evidence>
<organism>
    <name type="scientific">Brucella ovis (strain ATCC 25840 / 63/290 / NCTC 10512)</name>
    <dbReference type="NCBI Taxonomy" id="444178"/>
    <lineage>
        <taxon>Bacteria</taxon>
        <taxon>Pseudomonadati</taxon>
        <taxon>Pseudomonadota</taxon>
        <taxon>Alphaproteobacteria</taxon>
        <taxon>Hyphomicrobiales</taxon>
        <taxon>Brucellaceae</taxon>
        <taxon>Brucella/Ochrobactrum group</taxon>
        <taxon>Brucella</taxon>
    </lineage>
</organism>
<sequence>MSENTIYSGLKQLGSHTDIPLTPEEAVLERVANPQEGTPYCVRFTAPEFTSLCPMTGQPDFAHLVIDYVPGKWLVESKSLKLFLFSFRNHGAFHEDCTVTIGKRLVDLLEPEWLRIGGYWYPRGGIPIDVFYQTGAAPLNVWIPEQGVANYRGRG</sequence>
<keyword id="KW-0963">Cytoplasm</keyword>
<keyword id="KW-0521">NADP</keyword>
<keyword id="KW-0560">Oxidoreductase</keyword>
<keyword id="KW-0671">Queuosine biosynthesis</keyword>
<reference key="1">
    <citation type="journal article" date="2009" name="PLoS ONE">
        <title>Genome degradation in Brucella ovis corresponds with narrowing of its host range and tissue tropism.</title>
        <authorList>
            <person name="Tsolis R.M."/>
            <person name="Seshadri R."/>
            <person name="Santos R.L."/>
            <person name="Sangari F.J."/>
            <person name="Lobo J.M."/>
            <person name="de Jong M.F."/>
            <person name="Ren Q."/>
            <person name="Myers G."/>
            <person name="Brinkac L.M."/>
            <person name="Nelson W.C."/>
            <person name="Deboy R.T."/>
            <person name="Angiuoli S."/>
            <person name="Khouri H."/>
            <person name="Dimitrov G."/>
            <person name="Robinson J.R."/>
            <person name="Mulligan S."/>
            <person name="Walker R.L."/>
            <person name="Elzer P.E."/>
            <person name="Hassan K.A."/>
            <person name="Paulsen I.T."/>
        </authorList>
    </citation>
    <scope>NUCLEOTIDE SEQUENCE [LARGE SCALE GENOMIC DNA]</scope>
    <source>
        <strain>ATCC 25840 / 63/290 / NCTC 10512</strain>
    </source>
</reference>
<comment type="function">
    <text evidence="1">Catalyzes the NADPH-dependent reduction of 7-cyano-7-deazaguanine (preQ0) to 7-aminomethyl-7-deazaguanine (preQ1).</text>
</comment>
<comment type="catalytic activity">
    <reaction evidence="1">
        <text>7-aminomethyl-7-carbaguanine + 2 NADP(+) = 7-cyano-7-deazaguanine + 2 NADPH + 3 H(+)</text>
        <dbReference type="Rhea" id="RHEA:13409"/>
        <dbReference type="ChEBI" id="CHEBI:15378"/>
        <dbReference type="ChEBI" id="CHEBI:45075"/>
        <dbReference type="ChEBI" id="CHEBI:57783"/>
        <dbReference type="ChEBI" id="CHEBI:58349"/>
        <dbReference type="ChEBI" id="CHEBI:58703"/>
        <dbReference type="EC" id="1.7.1.13"/>
    </reaction>
</comment>
<comment type="pathway">
    <text evidence="1">tRNA modification; tRNA-queuosine biosynthesis.</text>
</comment>
<comment type="subcellular location">
    <subcellularLocation>
        <location evidence="1">Cytoplasm</location>
    </subcellularLocation>
</comment>
<comment type="similarity">
    <text evidence="1">Belongs to the GTP cyclohydrolase I family. QueF type 1 subfamily.</text>
</comment>
<feature type="chain" id="PRO_1000062379" description="NADPH-dependent 7-cyano-7-deazaguanine reductase">
    <location>
        <begin position="1"/>
        <end position="155"/>
    </location>
</feature>
<feature type="active site" description="Thioimide intermediate" evidence="1">
    <location>
        <position position="53"/>
    </location>
</feature>
<feature type="active site" description="Proton donor" evidence="1">
    <location>
        <position position="60"/>
    </location>
</feature>
<feature type="binding site" evidence="1">
    <location>
        <begin position="75"/>
        <end position="77"/>
    </location>
    <ligand>
        <name>substrate</name>
    </ligand>
</feature>
<feature type="binding site" evidence="1">
    <location>
        <begin position="94"/>
        <end position="95"/>
    </location>
    <ligand>
        <name>substrate</name>
    </ligand>
</feature>
<proteinExistence type="inferred from homology"/>
<name>QUEF_BRUO2</name>
<protein>
    <recommendedName>
        <fullName evidence="1">NADPH-dependent 7-cyano-7-deazaguanine reductase</fullName>
        <ecNumber evidence="1">1.7.1.13</ecNumber>
    </recommendedName>
    <alternativeName>
        <fullName evidence="1">7-cyano-7-carbaguanine reductase</fullName>
    </alternativeName>
    <alternativeName>
        <fullName evidence="1">NADPH-dependent nitrile oxidoreductase</fullName>
    </alternativeName>
    <alternativeName>
        <fullName evidence="1">PreQ(0) reductase</fullName>
    </alternativeName>
</protein>